<sequence length="223" mass="24640">MKTIQIAIDGPASSGKSTVAKIIAKDFGFTYLDTGAMYRAATYMALKNQLVVEEVEALLALLDQHPISFGRSETGDQLVFVGDVDITHPIRENEVTNHVSAIAAIPEVREKLVSLQQEIAQQGGIVMDGRDIGTVVLPQAELKIFLVASVDERAERRYKENIAKGIETDLETLKKEIAARDYKDSHRETSPLKQAEDAVYLDTTGLNIQEVVEKIKAEAEKRM</sequence>
<comment type="catalytic activity">
    <reaction evidence="1">
        <text>CMP + ATP = CDP + ADP</text>
        <dbReference type="Rhea" id="RHEA:11600"/>
        <dbReference type="ChEBI" id="CHEBI:30616"/>
        <dbReference type="ChEBI" id="CHEBI:58069"/>
        <dbReference type="ChEBI" id="CHEBI:60377"/>
        <dbReference type="ChEBI" id="CHEBI:456216"/>
        <dbReference type="EC" id="2.7.4.25"/>
    </reaction>
</comment>
<comment type="catalytic activity">
    <reaction evidence="1">
        <text>dCMP + ATP = dCDP + ADP</text>
        <dbReference type="Rhea" id="RHEA:25094"/>
        <dbReference type="ChEBI" id="CHEBI:30616"/>
        <dbReference type="ChEBI" id="CHEBI:57566"/>
        <dbReference type="ChEBI" id="CHEBI:58593"/>
        <dbReference type="ChEBI" id="CHEBI:456216"/>
        <dbReference type="EC" id="2.7.4.25"/>
    </reaction>
</comment>
<comment type="subcellular location">
    <subcellularLocation>
        <location evidence="1">Cytoplasm</location>
    </subcellularLocation>
</comment>
<comment type="similarity">
    <text evidence="1">Belongs to the cytidylate kinase family. Type 1 subfamily.</text>
</comment>
<feature type="chain" id="PRO_1000125306" description="Cytidylate kinase">
    <location>
        <begin position="1"/>
        <end position="223"/>
    </location>
</feature>
<feature type="binding site" evidence="1">
    <location>
        <begin position="10"/>
        <end position="18"/>
    </location>
    <ligand>
        <name>ATP</name>
        <dbReference type="ChEBI" id="CHEBI:30616"/>
    </ligand>
</feature>
<keyword id="KW-0067">ATP-binding</keyword>
<keyword id="KW-0963">Cytoplasm</keyword>
<keyword id="KW-0418">Kinase</keyword>
<keyword id="KW-0547">Nucleotide-binding</keyword>
<keyword id="KW-0808">Transferase</keyword>
<proteinExistence type="inferred from homology"/>
<name>KCY_STRZT</name>
<evidence type="ECO:0000255" key="1">
    <source>
        <dbReference type="HAMAP-Rule" id="MF_00238"/>
    </source>
</evidence>
<organism>
    <name type="scientific">Streptococcus pneumoniae (strain Taiwan19F-14)</name>
    <dbReference type="NCBI Taxonomy" id="487213"/>
    <lineage>
        <taxon>Bacteria</taxon>
        <taxon>Bacillati</taxon>
        <taxon>Bacillota</taxon>
        <taxon>Bacilli</taxon>
        <taxon>Lactobacillales</taxon>
        <taxon>Streptococcaceae</taxon>
        <taxon>Streptococcus</taxon>
    </lineage>
</organism>
<protein>
    <recommendedName>
        <fullName evidence="1">Cytidylate kinase</fullName>
        <shortName evidence="1">CK</shortName>
        <ecNumber evidence="1">2.7.4.25</ecNumber>
    </recommendedName>
    <alternativeName>
        <fullName evidence="1">Cytidine monophosphate kinase</fullName>
        <shortName evidence="1">CMP kinase</shortName>
    </alternativeName>
</protein>
<accession>C1CSM2</accession>
<gene>
    <name evidence="1" type="primary">cmk</name>
    <name type="ordered locus">SPT_1543</name>
</gene>
<dbReference type="EC" id="2.7.4.25" evidence="1"/>
<dbReference type="EMBL" id="CP000921">
    <property type="protein sequence ID" value="ACO22226.1"/>
    <property type="molecule type" value="Genomic_DNA"/>
</dbReference>
<dbReference type="RefSeq" id="WP_000849386.1">
    <property type="nucleotide sequence ID" value="NC_012469.1"/>
</dbReference>
<dbReference type="SMR" id="C1CSM2"/>
<dbReference type="KEGG" id="snt:SPT_1543"/>
<dbReference type="HOGENOM" id="CLU_079959_0_2_9"/>
<dbReference type="GO" id="GO:0005829">
    <property type="term" value="C:cytosol"/>
    <property type="evidence" value="ECO:0007669"/>
    <property type="project" value="TreeGrafter"/>
</dbReference>
<dbReference type="GO" id="GO:0005524">
    <property type="term" value="F:ATP binding"/>
    <property type="evidence" value="ECO:0007669"/>
    <property type="project" value="UniProtKB-UniRule"/>
</dbReference>
<dbReference type="GO" id="GO:0036430">
    <property type="term" value="F:CMP kinase activity"/>
    <property type="evidence" value="ECO:0007669"/>
    <property type="project" value="RHEA"/>
</dbReference>
<dbReference type="GO" id="GO:0036431">
    <property type="term" value="F:dCMP kinase activity"/>
    <property type="evidence" value="ECO:0007669"/>
    <property type="project" value="RHEA"/>
</dbReference>
<dbReference type="GO" id="GO:0015949">
    <property type="term" value="P:nucleobase-containing small molecule interconversion"/>
    <property type="evidence" value="ECO:0007669"/>
    <property type="project" value="TreeGrafter"/>
</dbReference>
<dbReference type="GO" id="GO:0006220">
    <property type="term" value="P:pyrimidine nucleotide metabolic process"/>
    <property type="evidence" value="ECO:0007669"/>
    <property type="project" value="UniProtKB-UniRule"/>
</dbReference>
<dbReference type="CDD" id="cd02020">
    <property type="entry name" value="CMPK"/>
    <property type="match status" value="1"/>
</dbReference>
<dbReference type="FunFam" id="3.40.50.300:FF:000484">
    <property type="entry name" value="Cytidylate kinase"/>
    <property type="match status" value="1"/>
</dbReference>
<dbReference type="Gene3D" id="3.40.50.300">
    <property type="entry name" value="P-loop containing nucleotide triphosphate hydrolases"/>
    <property type="match status" value="1"/>
</dbReference>
<dbReference type="HAMAP" id="MF_00238">
    <property type="entry name" value="Cytidyl_kinase_type1"/>
    <property type="match status" value="1"/>
</dbReference>
<dbReference type="InterPro" id="IPR003136">
    <property type="entry name" value="Cytidylate_kin"/>
</dbReference>
<dbReference type="InterPro" id="IPR011994">
    <property type="entry name" value="Cytidylate_kinase_dom"/>
</dbReference>
<dbReference type="InterPro" id="IPR027417">
    <property type="entry name" value="P-loop_NTPase"/>
</dbReference>
<dbReference type="NCBIfam" id="TIGR00017">
    <property type="entry name" value="cmk"/>
    <property type="match status" value="1"/>
</dbReference>
<dbReference type="PANTHER" id="PTHR21299:SF2">
    <property type="entry name" value="CYTIDYLATE KINASE"/>
    <property type="match status" value="1"/>
</dbReference>
<dbReference type="PANTHER" id="PTHR21299">
    <property type="entry name" value="CYTIDYLATE KINASE/PANTOATE-BETA-ALANINE LIGASE"/>
    <property type="match status" value="1"/>
</dbReference>
<dbReference type="Pfam" id="PF02224">
    <property type="entry name" value="Cytidylate_kin"/>
    <property type="match status" value="1"/>
</dbReference>
<dbReference type="SUPFAM" id="SSF52540">
    <property type="entry name" value="P-loop containing nucleoside triphosphate hydrolases"/>
    <property type="match status" value="1"/>
</dbReference>
<reference key="1">
    <citation type="journal article" date="2010" name="Genome Biol.">
        <title>Structure and dynamics of the pan-genome of Streptococcus pneumoniae and closely related species.</title>
        <authorList>
            <person name="Donati C."/>
            <person name="Hiller N.L."/>
            <person name="Tettelin H."/>
            <person name="Muzzi A."/>
            <person name="Croucher N.J."/>
            <person name="Angiuoli S.V."/>
            <person name="Oggioni M."/>
            <person name="Dunning Hotopp J.C."/>
            <person name="Hu F.Z."/>
            <person name="Riley D.R."/>
            <person name="Covacci A."/>
            <person name="Mitchell T.J."/>
            <person name="Bentley S.D."/>
            <person name="Kilian M."/>
            <person name="Ehrlich G.D."/>
            <person name="Rappuoli R."/>
            <person name="Moxon E.R."/>
            <person name="Masignani V."/>
        </authorList>
    </citation>
    <scope>NUCLEOTIDE SEQUENCE [LARGE SCALE GENOMIC DNA]</scope>
    <source>
        <strain>Taiwan19F-14</strain>
    </source>
</reference>